<comment type="function">
    <text>May be involved in transcriptional regulation.</text>
</comment>
<comment type="subcellular location">
    <subcellularLocation>
        <location evidence="2">Nucleus</location>
    </subcellularLocation>
</comment>
<comment type="similarity">
    <text evidence="2">Belongs to the krueppel C2H2-type zinc-finger protein family.</text>
</comment>
<feature type="chain" id="PRO_0000047812" description="Oocyte zinc finger protein XlCOF7.2">
    <location>
        <begin position="1" status="less than"/>
        <end position="391" status="greater than"/>
    </location>
</feature>
<feature type="zinc finger region" description="C2H2-type 1" evidence="1">
    <location>
        <begin position="284"/>
        <end position="306"/>
    </location>
</feature>
<feature type="zinc finger region" description="C2H2-type 2" evidence="1">
    <location>
        <begin position="312"/>
        <end position="334"/>
    </location>
</feature>
<feature type="zinc finger region" description="C2H2-type 3" evidence="1">
    <location>
        <begin position="340"/>
        <end position="362"/>
    </location>
</feature>
<feature type="zinc finger region" description="C2H2-type 4" evidence="1">
    <location>
        <begin position="368"/>
        <end position="391"/>
    </location>
</feature>
<feature type="non-terminal residue">
    <location>
        <position position="1"/>
    </location>
</feature>
<feature type="non-terminal residue">
    <location>
        <position position="391"/>
    </location>
</feature>
<sequence>DDGGALHAPGSVIQKENNKNDKKILELMSNIIQLLTGEVAIRTHHVSIYFSLDEWDYITGNKDLYEEGMKEEPQQLHPLAACEYKDESNVAAHTEATLCCNNDGNFTEMSPVEQPPPANGIKEEVASWEGGNQSDCSINKCTEQIQGTDTPTPIMGYRMNNSLLENYISNAIKEETASCEEINQSNCSINPLTEQIQGTDTPTPIMGYSLFRIPCNKSDESADTSPHKSRITKKTLHKKNSCVVSHKITPIGEKPVSTSGCGKYFMKSSELSVHPRTHTGEKPFPCSECGKCFINQSTLARHYRTHTGEKPYPCSECGKCFASSTYLRDHRRIHTGEKLSSCSECGKYFLNCWSLARHHRTHTGEKPYSCSECGKSFAISSDLAGHRRRTH</sequence>
<reference key="1">
    <citation type="journal article" date="1989" name="Proc. Natl. Acad. Sci. U.S.A.">
        <title>Evolutionary conserved modules associated with zinc fingers in Xenopus laevis.</title>
        <authorList>
            <person name="Knoechel W."/>
            <person name="Poeting A."/>
            <person name="Koester M."/>
            <person name="el Baradi T."/>
            <person name="Nietfeld W."/>
            <person name="Bouwmeester T."/>
            <person name="Pieler T."/>
        </authorList>
    </citation>
    <scope>NUCLEOTIDE SEQUENCE [MRNA] OF 1-306</scope>
</reference>
<reference key="2">
    <citation type="journal article" date="1989" name="J. Mol. Biol.">
        <title>Second-order repeats in Xenopus laevis finger proteins.</title>
        <authorList>
            <person name="Nietfeld W."/>
            <person name="El-Baradi T."/>
            <person name="Mentzel H."/>
            <person name="Pieler T."/>
            <person name="Koester M."/>
            <person name="Poeting A."/>
            <person name="Knoechel W."/>
        </authorList>
    </citation>
    <scope>NUCLEOTIDE SEQUENCE [MRNA] OF 279-391</scope>
</reference>
<name>ZO72_XENLA</name>
<organism>
    <name type="scientific">Xenopus laevis</name>
    <name type="common">African clawed frog</name>
    <dbReference type="NCBI Taxonomy" id="8355"/>
    <lineage>
        <taxon>Eukaryota</taxon>
        <taxon>Metazoa</taxon>
        <taxon>Chordata</taxon>
        <taxon>Craniata</taxon>
        <taxon>Vertebrata</taxon>
        <taxon>Euteleostomi</taxon>
        <taxon>Amphibia</taxon>
        <taxon>Batrachia</taxon>
        <taxon>Anura</taxon>
        <taxon>Pipoidea</taxon>
        <taxon>Pipidae</taxon>
        <taxon>Xenopodinae</taxon>
        <taxon>Xenopus</taxon>
        <taxon>Xenopus</taxon>
    </lineage>
</organism>
<keyword id="KW-0238">DNA-binding</keyword>
<keyword id="KW-0479">Metal-binding</keyword>
<keyword id="KW-0539">Nucleus</keyword>
<keyword id="KW-1185">Reference proteome</keyword>
<keyword id="KW-0677">Repeat</keyword>
<keyword id="KW-0804">Transcription</keyword>
<keyword id="KW-0805">Transcription regulation</keyword>
<keyword id="KW-0862">Zinc</keyword>
<keyword id="KW-0863">Zinc-finger</keyword>
<protein>
    <recommendedName>
        <fullName>Oocyte zinc finger protein XlCOF7.2</fullName>
    </recommendedName>
</protein>
<accession>P18752</accession>
<proteinExistence type="evidence at transcript level"/>
<evidence type="ECO:0000255" key="1">
    <source>
        <dbReference type="PROSITE-ProRule" id="PRU00042"/>
    </source>
</evidence>
<evidence type="ECO:0000305" key="2"/>
<dbReference type="EMBL" id="M25867">
    <property type="protein sequence ID" value="AAA50014.1"/>
    <property type="molecule type" value="mRNA"/>
</dbReference>
<dbReference type="PIR" id="B33282">
    <property type="entry name" value="B33282"/>
</dbReference>
<dbReference type="PIR" id="S06547">
    <property type="entry name" value="S06547"/>
</dbReference>
<dbReference type="SMR" id="P18752"/>
<dbReference type="AGR" id="Xenbase:XB-GENE-5774302"/>
<dbReference type="Xenbase" id="XB-GENE-5774302">
    <property type="gene designation" value="znf782.S"/>
</dbReference>
<dbReference type="Proteomes" id="UP000186698">
    <property type="component" value="Unplaced"/>
</dbReference>
<dbReference type="GO" id="GO:0005634">
    <property type="term" value="C:nucleus"/>
    <property type="evidence" value="ECO:0007669"/>
    <property type="project" value="UniProtKB-SubCell"/>
</dbReference>
<dbReference type="GO" id="GO:0000981">
    <property type="term" value="F:DNA-binding transcription factor activity, RNA polymerase II-specific"/>
    <property type="evidence" value="ECO:0000318"/>
    <property type="project" value="GO_Central"/>
</dbReference>
<dbReference type="GO" id="GO:0000978">
    <property type="term" value="F:RNA polymerase II cis-regulatory region sequence-specific DNA binding"/>
    <property type="evidence" value="ECO:0000318"/>
    <property type="project" value="GO_Central"/>
</dbReference>
<dbReference type="GO" id="GO:0008270">
    <property type="term" value="F:zinc ion binding"/>
    <property type="evidence" value="ECO:0007669"/>
    <property type="project" value="UniProtKB-KW"/>
</dbReference>
<dbReference type="GO" id="GO:0006357">
    <property type="term" value="P:regulation of transcription by RNA polymerase II"/>
    <property type="evidence" value="ECO:0000318"/>
    <property type="project" value="GO_Central"/>
</dbReference>
<dbReference type="FunFam" id="3.30.160.60:FF:001155">
    <property type="entry name" value="Zinc finger 30C"/>
    <property type="match status" value="1"/>
</dbReference>
<dbReference type="FunFam" id="3.30.160.60:FF:000744">
    <property type="entry name" value="zinc finger E-box-binding homeobox 1"/>
    <property type="match status" value="1"/>
</dbReference>
<dbReference type="FunFam" id="3.30.160.60:FF:001007">
    <property type="entry name" value="Zinc finger protein 1184"/>
    <property type="match status" value="1"/>
</dbReference>
<dbReference type="FunFam" id="3.30.160.60:FF:002592">
    <property type="entry name" value="Zinc finger protein 527"/>
    <property type="match status" value="1"/>
</dbReference>
<dbReference type="Gene3D" id="3.30.160.60">
    <property type="entry name" value="Classic Zinc Finger"/>
    <property type="match status" value="5"/>
</dbReference>
<dbReference type="InterPro" id="IPR036236">
    <property type="entry name" value="Znf_C2H2_sf"/>
</dbReference>
<dbReference type="InterPro" id="IPR013087">
    <property type="entry name" value="Znf_C2H2_type"/>
</dbReference>
<dbReference type="PANTHER" id="PTHR24381:SF440">
    <property type="entry name" value="OOCYTE ZINC FINGER PROTEIN XLCOF7.1-LIKE"/>
    <property type="match status" value="1"/>
</dbReference>
<dbReference type="PANTHER" id="PTHR24381">
    <property type="entry name" value="ZINC FINGER PROTEIN"/>
    <property type="match status" value="1"/>
</dbReference>
<dbReference type="Pfam" id="PF00096">
    <property type="entry name" value="zf-C2H2"/>
    <property type="match status" value="3"/>
</dbReference>
<dbReference type="SMART" id="SM00355">
    <property type="entry name" value="ZnF_C2H2"/>
    <property type="match status" value="4"/>
</dbReference>
<dbReference type="SUPFAM" id="SSF57667">
    <property type="entry name" value="beta-beta-alpha zinc fingers"/>
    <property type="match status" value="3"/>
</dbReference>
<dbReference type="PROSITE" id="PS00028">
    <property type="entry name" value="ZINC_FINGER_C2H2_1"/>
    <property type="match status" value="4"/>
</dbReference>
<dbReference type="PROSITE" id="PS50157">
    <property type="entry name" value="ZINC_FINGER_C2H2_2"/>
    <property type="match status" value="5"/>
</dbReference>